<evidence type="ECO:0000255" key="1">
    <source>
        <dbReference type="HAMAP-Rule" id="MF_01350"/>
    </source>
</evidence>
<keyword id="KW-0997">Cell inner membrane</keyword>
<keyword id="KW-1003">Cell membrane</keyword>
<keyword id="KW-0472">Membrane</keyword>
<keyword id="KW-0520">NAD</keyword>
<keyword id="KW-0874">Quinone</keyword>
<keyword id="KW-1185">Reference proteome</keyword>
<keyword id="KW-1278">Translocase</keyword>
<keyword id="KW-0812">Transmembrane</keyword>
<keyword id="KW-1133">Transmembrane helix</keyword>
<keyword id="KW-0830">Ubiquinone</keyword>
<gene>
    <name evidence="1" type="primary">nuoH</name>
    <name type="ordered locus">SARI_00577</name>
</gene>
<proteinExistence type="inferred from homology"/>
<dbReference type="EC" id="7.1.1.-" evidence="1"/>
<dbReference type="EMBL" id="CP000880">
    <property type="protein sequence ID" value="ABX20503.1"/>
    <property type="molecule type" value="Genomic_DNA"/>
</dbReference>
<dbReference type="SMR" id="A9MJA3"/>
<dbReference type="STRING" id="41514.SARI_00577"/>
<dbReference type="KEGG" id="ses:SARI_00577"/>
<dbReference type="HOGENOM" id="CLU_015134_0_1_6"/>
<dbReference type="Proteomes" id="UP000002084">
    <property type="component" value="Chromosome"/>
</dbReference>
<dbReference type="GO" id="GO:0005886">
    <property type="term" value="C:plasma membrane"/>
    <property type="evidence" value="ECO:0007669"/>
    <property type="project" value="UniProtKB-SubCell"/>
</dbReference>
<dbReference type="GO" id="GO:0003954">
    <property type="term" value="F:NADH dehydrogenase activity"/>
    <property type="evidence" value="ECO:0007669"/>
    <property type="project" value="TreeGrafter"/>
</dbReference>
<dbReference type="GO" id="GO:0016655">
    <property type="term" value="F:oxidoreductase activity, acting on NAD(P)H, quinone or similar compound as acceptor"/>
    <property type="evidence" value="ECO:0007669"/>
    <property type="project" value="UniProtKB-UniRule"/>
</dbReference>
<dbReference type="GO" id="GO:0048038">
    <property type="term" value="F:quinone binding"/>
    <property type="evidence" value="ECO:0007669"/>
    <property type="project" value="UniProtKB-KW"/>
</dbReference>
<dbReference type="GO" id="GO:0009060">
    <property type="term" value="P:aerobic respiration"/>
    <property type="evidence" value="ECO:0007669"/>
    <property type="project" value="TreeGrafter"/>
</dbReference>
<dbReference type="HAMAP" id="MF_01350">
    <property type="entry name" value="NDH1_NuoH"/>
    <property type="match status" value="1"/>
</dbReference>
<dbReference type="InterPro" id="IPR001694">
    <property type="entry name" value="NADH_UbQ_OxRdtase_su1/FPO"/>
</dbReference>
<dbReference type="InterPro" id="IPR018086">
    <property type="entry name" value="NADH_UbQ_OxRdtase_su1_CS"/>
</dbReference>
<dbReference type="NCBIfam" id="NF004740">
    <property type="entry name" value="PRK06076.1-1"/>
    <property type="match status" value="1"/>
</dbReference>
<dbReference type="NCBIfam" id="NF004741">
    <property type="entry name" value="PRK06076.1-2"/>
    <property type="match status" value="1"/>
</dbReference>
<dbReference type="PANTHER" id="PTHR11432">
    <property type="entry name" value="NADH DEHYDROGENASE SUBUNIT 1"/>
    <property type="match status" value="1"/>
</dbReference>
<dbReference type="PANTHER" id="PTHR11432:SF3">
    <property type="entry name" value="NADH-UBIQUINONE OXIDOREDUCTASE CHAIN 1"/>
    <property type="match status" value="1"/>
</dbReference>
<dbReference type="Pfam" id="PF00146">
    <property type="entry name" value="NADHdh"/>
    <property type="match status" value="1"/>
</dbReference>
<dbReference type="PROSITE" id="PS00667">
    <property type="entry name" value="COMPLEX1_ND1_1"/>
    <property type="match status" value="1"/>
</dbReference>
<dbReference type="PROSITE" id="PS00668">
    <property type="entry name" value="COMPLEX1_ND1_2"/>
    <property type="match status" value="1"/>
</dbReference>
<feature type="chain" id="PRO_1000086948" description="NADH-quinone oxidoreductase subunit H">
    <location>
        <begin position="1"/>
        <end position="325"/>
    </location>
</feature>
<feature type="transmembrane region" description="Helical" evidence="1">
    <location>
        <begin position="11"/>
        <end position="31"/>
    </location>
</feature>
<feature type="transmembrane region" description="Helical" evidence="1">
    <location>
        <begin position="50"/>
        <end position="69"/>
    </location>
</feature>
<feature type="transmembrane region" description="Helical" evidence="1">
    <location>
        <begin position="81"/>
        <end position="101"/>
    </location>
</feature>
<feature type="transmembrane region" description="Helical" evidence="1">
    <location>
        <begin position="114"/>
        <end position="134"/>
    </location>
</feature>
<feature type="transmembrane region" description="Helical" evidence="1">
    <location>
        <begin position="154"/>
        <end position="174"/>
    </location>
</feature>
<feature type="transmembrane region" description="Helical" evidence="1">
    <location>
        <begin position="186"/>
        <end position="206"/>
    </location>
</feature>
<feature type="transmembrane region" description="Helical" evidence="1">
    <location>
        <begin position="237"/>
        <end position="257"/>
    </location>
</feature>
<feature type="transmembrane region" description="Helical" evidence="1">
    <location>
        <begin position="265"/>
        <end position="285"/>
    </location>
</feature>
<feature type="transmembrane region" description="Helical" evidence="1">
    <location>
        <begin position="304"/>
        <end position="324"/>
    </location>
</feature>
<protein>
    <recommendedName>
        <fullName evidence="1">NADH-quinone oxidoreductase subunit H</fullName>
        <ecNumber evidence="1">7.1.1.-</ecNumber>
    </recommendedName>
    <alternativeName>
        <fullName evidence="1">NADH dehydrogenase I subunit H</fullName>
    </alternativeName>
    <alternativeName>
        <fullName evidence="1">NDH-1 subunit H</fullName>
    </alternativeName>
</protein>
<comment type="function">
    <text evidence="1">NDH-1 shuttles electrons from NADH, via FMN and iron-sulfur (Fe-S) centers, to quinones in the respiratory chain. The immediate electron acceptor for the enzyme in this species is believed to be ubiquinone. Couples the redox reaction to proton translocation (for every two electrons transferred, four hydrogen ions are translocated across the cytoplasmic membrane), and thus conserves the redox energy in a proton gradient. This subunit may bind ubiquinone.</text>
</comment>
<comment type="catalytic activity">
    <reaction evidence="1">
        <text>a quinone + NADH + 5 H(+)(in) = a quinol + NAD(+) + 4 H(+)(out)</text>
        <dbReference type="Rhea" id="RHEA:57888"/>
        <dbReference type="ChEBI" id="CHEBI:15378"/>
        <dbReference type="ChEBI" id="CHEBI:24646"/>
        <dbReference type="ChEBI" id="CHEBI:57540"/>
        <dbReference type="ChEBI" id="CHEBI:57945"/>
        <dbReference type="ChEBI" id="CHEBI:132124"/>
    </reaction>
</comment>
<comment type="subunit">
    <text evidence="1">NDH-1 is composed of 13 different subunits. Subunits NuoA, H, J, K, L, M, N constitute the membrane sector of the complex.</text>
</comment>
<comment type="subcellular location">
    <subcellularLocation>
        <location evidence="1">Cell inner membrane</location>
        <topology evidence="1">Multi-pass membrane protein</topology>
    </subcellularLocation>
</comment>
<comment type="similarity">
    <text evidence="1">Belongs to the complex I subunit 1 family.</text>
</comment>
<reference key="1">
    <citation type="submission" date="2007-11" db="EMBL/GenBank/DDBJ databases">
        <authorList>
            <consortium name="The Salmonella enterica serovar Arizonae Genome Sequencing Project"/>
            <person name="McClelland M."/>
            <person name="Sanderson E.K."/>
            <person name="Porwollik S."/>
            <person name="Spieth J."/>
            <person name="Clifton W.S."/>
            <person name="Fulton R."/>
            <person name="Chunyan W."/>
            <person name="Wollam A."/>
            <person name="Shah N."/>
            <person name="Pepin K."/>
            <person name="Bhonagiri V."/>
            <person name="Nash W."/>
            <person name="Johnson M."/>
            <person name="Thiruvilangam P."/>
            <person name="Wilson R."/>
        </authorList>
    </citation>
    <scope>NUCLEOTIDE SEQUENCE [LARGE SCALE GENOMIC DNA]</scope>
    <source>
        <strain>ATCC BAA-731 / CDC346-86 / RSK2980</strain>
    </source>
</reference>
<name>NUOH_SALAR</name>
<organism>
    <name type="scientific">Salmonella arizonae (strain ATCC BAA-731 / CDC346-86 / RSK2980)</name>
    <dbReference type="NCBI Taxonomy" id="41514"/>
    <lineage>
        <taxon>Bacteria</taxon>
        <taxon>Pseudomonadati</taxon>
        <taxon>Pseudomonadota</taxon>
        <taxon>Gammaproteobacteria</taxon>
        <taxon>Enterobacterales</taxon>
        <taxon>Enterobacteriaceae</taxon>
        <taxon>Salmonella</taxon>
    </lineage>
</organism>
<sequence>MSWITPDLIEILLSILKAVVILLVVVTCGAFMSFGERRLLGLFQNRYGPNRVGWGGSLQLVADMIKMFFKEDWVPKFSDRVIFTLAPMIAFTSLLLSFAIVPVSPNWVVADLNIGILFFLMMAGLAVYAVLFAGWSSNNKYSLLGAMRASAQTVSYEVFLGLSLMGVVAQAGSFNMTDIVNNQAHLWNVIPQFFGFVTFAIAGVAVCHRHPFDQPEAEQELADGYHIEYSGMKFGLFFVGEYIGIVTVSALMVTLFFGGWHGPFLPPFVWFALKTAFFMMMFILIRASLPRPRYDQVMSFGWKVCLPLTLINLLVTAAVILWQAQ</sequence>
<accession>A9MJA3</accession>